<dbReference type="EC" id="1.14.11.-" evidence="1"/>
<dbReference type="EMBL" id="AC002131">
    <property type="protein sequence ID" value="AAC17616.1"/>
    <property type="status" value="ALT_SEQ"/>
    <property type="molecule type" value="Genomic_DNA"/>
</dbReference>
<dbReference type="EMBL" id="CP002684">
    <property type="protein sequence ID" value="AEE28820.1"/>
    <property type="molecule type" value="Genomic_DNA"/>
</dbReference>
<dbReference type="EMBL" id="CP002684">
    <property type="protein sequence ID" value="ANM60277.1"/>
    <property type="molecule type" value="Genomic_DNA"/>
</dbReference>
<dbReference type="EMBL" id="AB493451">
    <property type="protein sequence ID" value="BAH30289.1"/>
    <property type="molecule type" value="mRNA"/>
</dbReference>
<dbReference type="PIR" id="D86254">
    <property type="entry name" value="D86254"/>
</dbReference>
<dbReference type="RefSeq" id="NP_001322575.1">
    <property type="nucleotide sequence ID" value="NM_001332013.1"/>
</dbReference>
<dbReference type="RefSeq" id="NP_172659.3">
    <property type="nucleotide sequence ID" value="NM_101067.6"/>
</dbReference>
<dbReference type="SMR" id="C0SUU8"/>
<dbReference type="FunCoup" id="C0SUU8">
    <property type="interactions" value="74"/>
</dbReference>
<dbReference type="STRING" id="3702.C0SUU8"/>
<dbReference type="PaxDb" id="3702-AT1G11950.1"/>
<dbReference type="ProteomicsDB" id="177401"/>
<dbReference type="EnsemblPlants" id="AT1G11950.1">
    <property type="protein sequence ID" value="AT1G11950.1"/>
    <property type="gene ID" value="AT1G11950"/>
</dbReference>
<dbReference type="EnsemblPlants" id="AT1G11950.3">
    <property type="protein sequence ID" value="AT1G11950.3"/>
    <property type="gene ID" value="AT1G11950"/>
</dbReference>
<dbReference type="GeneID" id="837747"/>
<dbReference type="Gramene" id="AT1G11950.1">
    <property type="protein sequence ID" value="AT1G11950.1"/>
    <property type="gene ID" value="AT1G11950"/>
</dbReference>
<dbReference type="Gramene" id="AT1G11950.3">
    <property type="protein sequence ID" value="AT1G11950.3"/>
    <property type="gene ID" value="AT1G11950"/>
</dbReference>
<dbReference type="KEGG" id="ath:AT1G11950"/>
<dbReference type="Araport" id="AT1G11950"/>
<dbReference type="TAIR" id="AT1G11950"/>
<dbReference type="eggNOG" id="KOG1356">
    <property type="taxonomic scope" value="Eukaryota"/>
</dbReference>
<dbReference type="HOGENOM" id="CLU_001811_2_1_1"/>
<dbReference type="InParanoid" id="C0SUU8"/>
<dbReference type="OMA" id="NFNDCRS"/>
<dbReference type="PRO" id="PR:C0SUU8"/>
<dbReference type="Proteomes" id="UP000006548">
    <property type="component" value="Chromosome 1"/>
</dbReference>
<dbReference type="ExpressionAtlas" id="C0SUU8">
    <property type="expression patterns" value="baseline and differential"/>
</dbReference>
<dbReference type="GO" id="GO:0048188">
    <property type="term" value="C:Set1C/COMPASS complex"/>
    <property type="evidence" value="ECO:0000314"/>
    <property type="project" value="TAIR"/>
</dbReference>
<dbReference type="GO" id="GO:0032454">
    <property type="term" value="F:histone H3K9 demethylase activity"/>
    <property type="evidence" value="ECO:0007669"/>
    <property type="project" value="InterPro"/>
</dbReference>
<dbReference type="GO" id="GO:0016491">
    <property type="term" value="F:oxidoreductase activity"/>
    <property type="evidence" value="ECO:0007669"/>
    <property type="project" value="UniProtKB-KW"/>
</dbReference>
<dbReference type="GO" id="GO:0008270">
    <property type="term" value="F:zinc ion binding"/>
    <property type="evidence" value="ECO:0007669"/>
    <property type="project" value="UniProtKB-KW"/>
</dbReference>
<dbReference type="CDD" id="cd02208">
    <property type="entry name" value="cupin_RmlC-like"/>
    <property type="match status" value="1"/>
</dbReference>
<dbReference type="FunFam" id="2.60.120.650:FF:000026">
    <property type="entry name" value="Transcription factor jumonji domain-containing protein"/>
    <property type="match status" value="1"/>
</dbReference>
<dbReference type="Gene3D" id="2.60.120.650">
    <property type="entry name" value="Cupin"/>
    <property type="match status" value="1"/>
</dbReference>
<dbReference type="InterPro" id="IPR045109">
    <property type="entry name" value="JHDM2-like"/>
</dbReference>
<dbReference type="InterPro" id="IPR003347">
    <property type="entry name" value="JmjC_dom"/>
</dbReference>
<dbReference type="PANTHER" id="PTHR12549">
    <property type="entry name" value="JMJC DOMAIN-CONTAINING HISTONE DEMETHYLATION PROTEIN"/>
    <property type="match status" value="1"/>
</dbReference>
<dbReference type="PANTHER" id="PTHR12549:SF37">
    <property type="entry name" value="LYSINE-SPECIFIC DEMETHYLASE JMJ26"/>
    <property type="match status" value="1"/>
</dbReference>
<dbReference type="Pfam" id="PF02373">
    <property type="entry name" value="JmjC"/>
    <property type="match status" value="1"/>
</dbReference>
<dbReference type="SMART" id="SM00558">
    <property type="entry name" value="JmjC"/>
    <property type="match status" value="1"/>
</dbReference>
<dbReference type="SUPFAM" id="SSF51197">
    <property type="entry name" value="Clavaminate synthase-like"/>
    <property type="match status" value="1"/>
</dbReference>
<dbReference type="PROSITE" id="PS51184">
    <property type="entry name" value="JMJC"/>
    <property type="match status" value="1"/>
</dbReference>
<keyword id="KW-0408">Iron</keyword>
<keyword id="KW-0479">Metal-binding</keyword>
<keyword id="KW-0539">Nucleus</keyword>
<keyword id="KW-0560">Oxidoreductase</keyword>
<keyword id="KW-1185">Reference proteome</keyword>
<keyword id="KW-0862">Zinc</keyword>
<keyword id="KW-0863">Zinc-finger</keyword>
<feature type="chain" id="PRO_0000456192" description="Lysine-specific demethylase JMJ26">
    <location>
        <begin position="1"/>
        <end position="875"/>
    </location>
</feature>
<feature type="domain" description="JmjC" evidence="5">
    <location>
        <begin position="614"/>
        <end position="837"/>
    </location>
</feature>
<feature type="zinc finger region" description="RING-type; degenerate" evidence="4">
    <location>
        <begin position="193"/>
        <end position="240"/>
    </location>
</feature>
<feature type="zinc finger region" description="B box-type; degenerate" evidence="3">
    <location>
        <begin position="317"/>
        <end position="347"/>
    </location>
</feature>
<feature type="region of interest" description="Disordered" evidence="7">
    <location>
        <begin position="31"/>
        <end position="103"/>
    </location>
</feature>
<feature type="short sequence motif" description="Nuclear localization signal" evidence="6">
    <location>
        <begin position="62"/>
        <end position="69"/>
    </location>
</feature>
<feature type="compositionally biased region" description="Basic and acidic residues" evidence="7">
    <location>
        <begin position="79"/>
        <end position="93"/>
    </location>
</feature>
<feature type="binding site" evidence="4">
    <location>
        <position position="193"/>
    </location>
    <ligand>
        <name>Zn(2+)</name>
        <dbReference type="ChEBI" id="CHEBI:29105"/>
        <label>1</label>
    </ligand>
</feature>
<feature type="binding site" evidence="4">
    <location>
        <position position="196"/>
    </location>
    <ligand>
        <name>Zn(2+)</name>
        <dbReference type="ChEBI" id="CHEBI:29105"/>
        <label>1</label>
    </ligand>
</feature>
<feature type="binding site" evidence="4">
    <location>
        <position position="207"/>
    </location>
    <ligand>
        <name>Zn(2+)</name>
        <dbReference type="ChEBI" id="CHEBI:29105"/>
        <label>2</label>
    </ligand>
</feature>
<feature type="binding site" evidence="4">
    <location>
        <position position="210"/>
    </location>
    <ligand>
        <name>Zn(2+)</name>
        <dbReference type="ChEBI" id="CHEBI:29105"/>
        <label>2</label>
    </ligand>
</feature>
<feature type="binding site" evidence="4">
    <location>
        <position position="216"/>
    </location>
    <ligand>
        <name>Zn(2+)</name>
        <dbReference type="ChEBI" id="CHEBI:29105"/>
        <label>1</label>
    </ligand>
</feature>
<feature type="binding site" evidence="4">
    <location>
        <position position="219"/>
    </location>
    <ligand>
        <name>Zn(2+)</name>
        <dbReference type="ChEBI" id="CHEBI:29105"/>
        <label>1</label>
    </ligand>
</feature>
<feature type="binding site" evidence="4">
    <location>
        <position position="236"/>
    </location>
    <ligand>
        <name>Zn(2+)</name>
        <dbReference type="ChEBI" id="CHEBI:29105"/>
        <label>2</label>
    </ligand>
</feature>
<feature type="binding site" evidence="4">
    <location>
        <position position="239"/>
    </location>
    <ligand>
        <name>Zn(2+)</name>
        <dbReference type="ChEBI" id="CHEBI:29105"/>
        <label>2</label>
    </ligand>
</feature>
<feature type="binding site" evidence="3">
    <location>
        <position position="322"/>
    </location>
    <ligand>
        <name>Zn(2+)</name>
        <dbReference type="ChEBI" id="CHEBI:29105"/>
        <label>3</label>
    </ligand>
</feature>
<feature type="binding site" evidence="3">
    <location>
        <position position="325"/>
    </location>
    <ligand>
        <name>Zn(2+)</name>
        <dbReference type="ChEBI" id="CHEBI:29105"/>
        <label>3</label>
    </ligand>
</feature>
<feature type="binding site" evidence="3">
    <location>
        <position position="339"/>
    </location>
    <ligand>
        <name>Zn(2+)</name>
        <dbReference type="ChEBI" id="CHEBI:29105"/>
        <label>3</label>
    </ligand>
</feature>
<feature type="binding site" evidence="3">
    <location>
        <position position="347"/>
    </location>
    <ligand>
        <name>Zn(2+)</name>
        <dbReference type="ChEBI" id="CHEBI:29105"/>
        <label>3</label>
    </ligand>
</feature>
<feature type="binding site" evidence="5">
    <location>
        <position position="658"/>
    </location>
    <ligand>
        <name>Fe cation</name>
        <dbReference type="ChEBI" id="CHEBI:24875"/>
        <note>catalytic</note>
    </ligand>
</feature>
<feature type="binding site" evidence="5">
    <location>
        <position position="660"/>
    </location>
    <ligand>
        <name>Fe cation</name>
        <dbReference type="ChEBI" id="CHEBI:24875"/>
        <note>catalytic</note>
    </ligand>
</feature>
<feature type="binding site" evidence="5">
    <location>
        <position position="805"/>
    </location>
    <ligand>
        <name>Fe cation</name>
        <dbReference type="ChEBI" id="CHEBI:24875"/>
        <note>catalytic</note>
    </ligand>
</feature>
<sequence length="875" mass="100146">MEGEVATNGVILKHNGVKDISLETCWPEKKKPVEATSLSSGSSDIEEEISVECPKRVANQRRKRSKADEIKTKSSRKRKCDDENKCEENEKKQRSSVKKRATTWKEEEVVVDDEKKCEQQLQLVPSSKATSRSRSKKSVSVDTWLVNNEIDVSALSSRSESELSDSYLKTEYFNDCRSMTRSLKANLGELAICHQCSKGERRYLFICTFCEVRLYCFPCIKKWYPHLSTDDILEKCPFCRGTCNCCTCLHSSGLIETSKRKLDKYERFYHLRFLIVAMLPFLKKLCKAQDQEIETEAKVQDSMASQVDISESLCSNEERVFCNHCATSIVDLHRSCPKCSYELCLNCCQEIRGGWLSDRPECQLQFEYRGTRYIHGEAAEPSSSSVSEDETKTPSIKWNADENGSIRCAPKELGGCGDSVLELKRILPVTWMSDLEQKAETFLASYSIKPPMSYCRCSSDMSSMKRKAASRDGSSDNYLYSPDSLDVLKQEELLHFQEHWSKGEPVIVRNALNNTAGLSWEPMVMWRALCENVDSAISSNMSDVKAIDCLANCEVKINTLCFFEGYSKGRTYENFWPEMLKLKDWPPSDKFENLLPRHCDEFISALPFQEYSDPRSGILNIATKLPEGLLKPDLGPKTYVAYGTSDELGRGDSVTKLHCDMSDAVNILMHTAEVTLSEEQRSAIADLKQKHKQQNEKELQEQNGLEEEEVVSDEIVVYDETSGALWDIFKREDVPKLEEYLRKHCIEFRHTYCSRVTKVYHPIHDQSYFLTVEHKRKLKAEFGIEPWTFVQKLGEAVFIPAGCPHQVRNLKSCTKVAVDFVSPENIDECLRLTDEFRQLPKNHKAREDKLEIKKMVIYAVEQALKEVETLLLDRS</sequence>
<accession>C0SUU8</accession>
<accession>A0A178WJ43</accession>
<accession>O65384</accession>
<proteinExistence type="evidence at transcript level"/>
<evidence type="ECO:0000250" key="1">
    <source>
        <dbReference type="UniProtKB" id="O64752"/>
    </source>
</evidence>
<evidence type="ECO:0000250" key="2">
    <source>
        <dbReference type="UniProtKB" id="Q8GUI6"/>
    </source>
</evidence>
<evidence type="ECO:0000255" key="3">
    <source>
        <dbReference type="PROSITE-ProRule" id="PRU00024"/>
    </source>
</evidence>
<evidence type="ECO:0000255" key="4">
    <source>
        <dbReference type="PROSITE-ProRule" id="PRU00175"/>
    </source>
</evidence>
<evidence type="ECO:0000255" key="5">
    <source>
        <dbReference type="PROSITE-ProRule" id="PRU00538"/>
    </source>
</evidence>
<evidence type="ECO:0000255" key="6">
    <source>
        <dbReference type="PROSITE-ProRule" id="PRU00768"/>
    </source>
</evidence>
<evidence type="ECO:0000256" key="7">
    <source>
        <dbReference type="SAM" id="MobiDB-lite"/>
    </source>
</evidence>
<evidence type="ECO:0000269" key="8">
    <source>
    </source>
</evidence>
<evidence type="ECO:0000303" key="9">
    <source>
    </source>
</evidence>
<evidence type="ECO:0000305" key="10"/>
<evidence type="ECO:0000312" key="11">
    <source>
        <dbReference type="Araport" id="AT1G11950"/>
    </source>
</evidence>
<evidence type="ECO:0000312" key="12">
    <source>
        <dbReference type="EMBL" id="AAC17616.1"/>
    </source>
</evidence>
<comment type="function">
    <text evidence="1">May function as histone H3 lysine demethylase and be involved in regulation of gene expression.</text>
</comment>
<comment type="cofactor">
    <cofactor evidence="2">
        <name>Fe(2+)</name>
        <dbReference type="ChEBI" id="CHEBI:29033"/>
    </cofactor>
    <text evidence="2">Binds 1 Fe(2+) ion per subunit.</text>
</comment>
<comment type="subcellular location">
    <subcellularLocation>
        <location evidence="6">Nucleus</location>
    </subcellularLocation>
</comment>
<comment type="tissue specificity">
    <text evidence="8">Expressed in inflorescences, roots, siliques, leaves and stems.</text>
</comment>
<comment type="similarity">
    <text evidence="10">Belongs to the JARID1 histone demethylase family.</text>
</comment>
<comment type="sequence caution" evidence="10">
    <conflict type="erroneous gene model prediction">
        <sequence resource="EMBL-CDS" id="AAC17616"/>
    </conflict>
</comment>
<protein>
    <recommendedName>
        <fullName evidence="9">Lysine-specific demethylase JMJ26</fullName>
        <ecNumber evidence="1">1.14.11.-</ecNumber>
    </recommendedName>
    <alternativeName>
        <fullName evidence="9">Jumonji domain-containing protein 26</fullName>
        <shortName evidence="9">AtJMJ26</shortName>
        <shortName evidence="9">Protein JUMONJI 26</shortName>
    </alternativeName>
    <alternativeName>
        <fullName evidence="9">Lysine-specific histone demethylase JMJ26</fullName>
    </alternativeName>
    <alternativeName>
        <fullName evidence="10">[histone H3]-trimethyl-L-lysine monodemethylase JMJ26</fullName>
    </alternativeName>
</protein>
<organism>
    <name type="scientific">Arabidopsis thaliana</name>
    <name type="common">Mouse-ear cress</name>
    <dbReference type="NCBI Taxonomy" id="3702"/>
    <lineage>
        <taxon>Eukaryota</taxon>
        <taxon>Viridiplantae</taxon>
        <taxon>Streptophyta</taxon>
        <taxon>Embryophyta</taxon>
        <taxon>Tracheophyta</taxon>
        <taxon>Spermatophyta</taxon>
        <taxon>Magnoliopsida</taxon>
        <taxon>eudicotyledons</taxon>
        <taxon>Gunneridae</taxon>
        <taxon>Pentapetalae</taxon>
        <taxon>rosids</taxon>
        <taxon>malvids</taxon>
        <taxon>Brassicales</taxon>
        <taxon>Brassicaceae</taxon>
        <taxon>Camelineae</taxon>
        <taxon>Arabidopsis</taxon>
    </lineage>
</organism>
<gene>
    <name evidence="9" type="primary">JMJ26</name>
    <name evidence="11" type="ordered locus">At1g11950</name>
    <name evidence="12" type="ORF">F12F1.18</name>
</gene>
<name>JMJ26_ARATH</name>
<reference key="1">
    <citation type="journal article" date="2000" name="Nature">
        <title>Sequence and analysis of chromosome 1 of the plant Arabidopsis thaliana.</title>
        <authorList>
            <person name="Theologis A."/>
            <person name="Ecker J.R."/>
            <person name="Palm C.J."/>
            <person name="Federspiel N.A."/>
            <person name="Kaul S."/>
            <person name="White O."/>
            <person name="Alonso J."/>
            <person name="Altafi H."/>
            <person name="Araujo R."/>
            <person name="Bowman C.L."/>
            <person name="Brooks S.Y."/>
            <person name="Buehler E."/>
            <person name="Chan A."/>
            <person name="Chao Q."/>
            <person name="Chen H."/>
            <person name="Cheuk R.F."/>
            <person name="Chin C.W."/>
            <person name="Chung M.K."/>
            <person name="Conn L."/>
            <person name="Conway A.B."/>
            <person name="Conway A.R."/>
            <person name="Creasy T.H."/>
            <person name="Dewar K."/>
            <person name="Dunn P."/>
            <person name="Etgu P."/>
            <person name="Feldblyum T.V."/>
            <person name="Feng J.-D."/>
            <person name="Fong B."/>
            <person name="Fujii C.Y."/>
            <person name="Gill J.E."/>
            <person name="Goldsmith A.D."/>
            <person name="Haas B."/>
            <person name="Hansen N.F."/>
            <person name="Hughes B."/>
            <person name="Huizar L."/>
            <person name="Hunter J.L."/>
            <person name="Jenkins J."/>
            <person name="Johnson-Hopson C."/>
            <person name="Khan S."/>
            <person name="Khaykin E."/>
            <person name="Kim C.J."/>
            <person name="Koo H.L."/>
            <person name="Kremenetskaia I."/>
            <person name="Kurtz D.B."/>
            <person name="Kwan A."/>
            <person name="Lam B."/>
            <person name="Langin-Hooper S."/>
            <person name="Lee A."/>
            <person name="Lee J.M."/>
            <person name="Lenz C.A."/>
            <person name="Li J.H."/>
            <person name="Li Y.-P."/>
            <person name="Lin X."/>
            <person name="Liu S.X."/>
            <person name="Liu Z.A."/>
            <person name="Luros J.S."/>
            <person name="Maiti R."/>
            <person name="Marziali A."/>
            <person name="Militscher J."/>
            <person name="Miranda M."/>
            <person name="Nguyen M."/>
            <person name="Nierman W.C."/>
            <person name="Osborne B.I."/>
            <person name="Pai G."/>
            <person name="Peterson J."/>
            <person name="Pham P.K."/>
            <person name="Rizzo M."/>
            <person name="Rooney T."/>
            <person name="Rowley D."/>
            <person name="Sakano H."/>
            <person name="Salzberg S.L."/>
            <person name="Schwartz J.R."/>
            <person name="Shinn P."/>
            <person name="Southwick A.M."/>
            <person name="Sun H."/>
            <person name="Tallon L.J."/>
            <person name="Tambunga G."/>
            <person name="Toriumi M.J."/>
            <person name="Town C.D."/>
            <person name="Utterback T."/>
            <person name="Van Aken S."/>
            <person name="Vaysberg M."/>
            <person name="Vysotskaia V.S."/>
            <person name="Walker M."/>
            <person name="Wu D."/>
            <person name="Yu G."/>
            <person name="Fraser C.M."/>
            <person name="Venter J.C."/>
            <person name="Davis R.W."/>
        </authorList>
    </citation>
    <scope>NUCLEOTIDE SEQUENCE [LARGE SCALE GENOMIC DNA]</scope>
    <source>
        <strain>cv. Columbia</strain>
    </source>
</reference>
<reference key="2">
    <citation type="journal article" date="2017" name="Plant J.">
        <title>Araport11: a complete reannotation of the Arabidopsis thaliana reference genome.</title>
        <authorList>
            <person name="Cheng C.Y."/>
            <person name="Krishnakumar V."/>
            <person name="Chan A.P."/>
            <person name="Thibaud-Nissen F."/>
            <person name="Schobel S."/>
            <person name="Town C.D."/>
        </authorList>
    </citation>
    <scope>GENOME REANNOTATION</scope>
    <source>
        <strain>cv. Columbia</strain>
    </source>
</reference>
<reference key="3">
    <citation type="submission" date="2009-03" db="EMBL/GenBank/DDBJ databases">
        <title>ORF cloning and analysis of Arabidopsis transcription factor genes.</title>
        <authorList>
            <person name="Fujita M."/>
        </authorList>
    </citation>
    <scope>NUCLEOTIDE SEQUENCE [LARGE SCALE MRNA]</scope>
</reference>
<reference key="4">
    <citation type="journal article" date="2008" name="J. Integr. Plant Biol.">
        <title>Comparative analysis of JmjC domain-containing proteins reveals the potential histone demethylases in Arabidopsis and rice.</title>
        <authorList>
            <person name="Lu F."/>
            <person name="Li G."/>
            <person name="Cui X."/>
            <person name="Liu C."/>
            <person name="Wang X.-J."/>
            <person name="Cao X."/>
        </authorList>
    </citation>
    <scope>GENE FAMILY</scope>
    <scope>NOMENCLATURE</scope>
    <scope>TISSUE SPECIFICITY</scope>
</reference>